<organism>
    <name type="scientific">Thermotoga maritima (strain ATCC 43589 / DSM 3109 / JCM 10099 / NBRC 100826 / MSB8)</name>
    <dbReference type="NCBI Taxonomy" id="243274"/>
    <lineage>
        <taxon>Bacteria</taxon>
        <taxon>Thermotogati</taxon>
        <taxon>Thermotogota</taxon>
        <taxon>Thermotogae</taxon>
        <taxon>Thermotogales</taxon>
        <taxon>Thermotogaceae</taxon>
        <taxon>Thermotoga</taxon>
    </lineage>
</organism>
<evidence type="ECO:0000255" key="1">
    <source>
        <dbReference type="HAMAP-Rule" id="MF_01849"/>
    </source>
</evidence>
<evidence type="ECO:0000255" key="2">
    <source>
        <dbReference type="PROSITE-ProRule" id="PRU01266"/>
    </source>
</evidence>
<gene>
    <name evidence="1" type="primary">rlmN</name>
    <name type="ordered locus">TM_1715</name>
</gene>
<reference key="1">
    <citation type="journal article" date="1999" name="Nature">
        <title>Evidence for lateral gene transfer between Archaea and Bacteria from genome sequence of Thermotoga maritima.</title>
        <authorList>
            <person name="Nelson K.E."/>
            <person name="Clayton R.A."/>
            <person name="Gill S.R."/>
            <person name="Gwinn M.L."/>
            <person name="Dodson R.J."/>
            <person name="Haft D.H."/>
            <person name="Hickey E.K."/>
            <person name="Peterson J.D."/>
            <person name="Nelson W.C."/>
            <person name="Ketchum K.A."/>
            <person name="McDonald L.A."/>
            <person name="Utterback T.R."/>
            <person name="Malek J.A."/>
            <person name="Linher K.D."/>
            <person name="Garrett M.M."/>
            <person name="Stewart A.M."/>
            <person name="Cotton M.D."/>
            <person name="Pratt M.S."/>
            <person name="Phillips C.A."/>
            <person name="Richardson D.L."/>
            <person name="Heidelberg J.F."/>
            <person name="Sutton G.G."/>
            <person name="Fleischmann R.D."/>
            <person name="Eisen J.A."/>
            <person name="White O."/>
            <person name="Salzberg S.L."/>
            <person name="Smith H.O."/>
            <person name="Venter J.C."/>
            <person name="Fraser C.M."/>
        </authorList>
    </citation>
    <scope>NUCLEOTIDE SEQUENCE [LARGE SCALE GENOMIC DNA]</scope>
    <source>
        <strain>ATCC 43589 / DSM 3109 / JCM 10099 / NBRC 100826 / MSB8</strain>
    </source>
</reference>
<feature type="chain" id="PRO_0000350500" description="Probable dual-specificity RNA methyltransferase RlmN">
    <location>
        <begin position="1"/>
        <end position="343"/>
    </location>
</feature>
<feature type="domain" description="Radical SAM core" evidence="2">
    <location>
        <begin position="97"/>
        <end position="326"/>
    </location>
</feature>
<feature type="active site" description="Proton acceptor" evidence="1">
    <location>
        <position position="91"/>
    </location>
</feature>
<feature type="active site" description="S-methylcysteine intermediate" evidence="1">
    <location>
        <position position="331"/>
    </location>
</feature>
<feature type="binding site" evidence="1">
    <location>
        <position position="111"/>
    </location>
    <ligand>
        <name>[4Fe-4S] cluster</name>
        <dbReference type="ChEBI" id="CHEBI:49883"/>
        <note>4Fe-4S-S-AdoMet</note>
    </ligand>
</feature>
<feature type="binding site" evidence="1">
    <location>
        <position position="115"/>
    </location>
    <ligand>
        <name>[4Fe-4S] cluster</name>
        <dbReference type="ChEBI" id="CHEBI:49883"/>
        <note>4Fe-4S-S-AdoMet</note>
    </ligand>
</feature>
<feature type="binding site" evidence="1">
    <location>
        <position position="118"/>
    </location>
    <ligand>
        <name>[4Fe-4S] cluster</name>
        <dbReference type="ChEBI" id="CHEBI:49883"/>
        <note>4Fe-4S-S-AdoMet</note>
    </ligand>
</feature>
<feature type="binding site" evidence="1">
    <location>
        <begin position="158"/>
        <end position="159"/>
    </location>
    <ligand>
        <name>S-adenosyl-L-methionine</name>
        <dbReference type="ChEBI" id="CHEBI:59789"/>
    </ligand>
</feature>
<feature type="binding site" evidence="1">
    <location>
        <position position="190"/>
    </location>
    <ligand>
        <name>S-adenosyl-L-methionine</name>
        <dbReference type="ChEBI" id="CHEBI:59789"/>
    </ligand>
</feature>
<feature type="binding site" evidence="1">
    <location>
        <begin position="213"/>
        <end position="215"/>
    </location>
    <ligand>
        <name>S-adenosyl-L-methionine</name>
        <dbReference type="ChEBI" id="CHEBI:59789"/>
    </ligand>
</feature>
<feature type="binding site" evidence="1">
    <location>
        <position position="289"/>
    </location>
    <ligand>
        <name>S-adenosyl-L-methionine</name>
        <dbReference type="ChEBI" id="CHEBI:59789"/>
    </ligand>
</feature>
<feature type="disulfide bond" description="(transient)" evidence="1">
    <location>
        <begin position="104"/>
        <end position="331"/>
    </location>
</feature>
<protein>
    <recommendedName>
        <fullName evidence="1">Probable dual-specificity RNA methyltransferase RlmN</fullName>
        <ecNumber evidence="1">2.1.1.192</ecNumber>
    </recommendedName>
    <alternativeName>
        <fullName evidence="1">23S rRNA (adenine(2503)-C(2))-methyltransferase</fullName>
    </alternativeName>
    <alternativeName>
        <fullName evidence="1">23S rRNA m2A2503 methyltransferase</fullName>
    </alternativeName>
    <alternativeName>
        <fullName evidence="1">Ribosomal RNA large subunit methyltransferase N</fullName>
    </alternativeName>
    <alternativeName>
        <fullName evidence="1">tRNA (adenine(37)-C(2))-methyltransferase</fullName>
    </alternativeName>
    <alternativeName>
        <fullName evidence="1">tRNA m2A37 methyltransferase</fullName>
    </alternativeName>
</protein>
<sequence>MKNLLDLSYEELVTEITNLGLERYRADQILDWVFDKKVNNFDEMTNLSKKHRALLKEHFSISFLKLLDKKVSRIDGTTKFLWELEDGNTIESVMLFHPDRITACISTQVGCPVKCIFCATGMSGFVRNLTTGEIVAQILSMEKEEKKKIGNVVYMGMGEPLLNYENTIKSIRILNHKKMGNIGIRRITISTVGIPDRIIQLAEEGLDVKLALSLHAPTNFKRDQLVPLNKKYSIEEILNAVKIYQRKTGNRVTIEYVLIRGINDEISDAKKLAEILRNMKVFVNLIPVNPTVEGLRRPSRERLLTFKRILLENGIEAEIRREKGTDIEAACGQLRLKRIKSRS</sequence>
<proteinExistence type="inferred from homology"/>
<accession>Q9X240</accession>
<comment type="function">
    <text evidence="1">Specifically methylates position 2 of adenine 2503 in 23S rRNA and position 2 of adenine 37 in tRNAs.</text>
</comment>
<comment type="catalytic activity">
    <reaction evidence="1">
        <text>adenosine(2503) in 23S rRNA + 2 reduced [2Fe-2S]-[ferredoxin] + 2 S-adenosyl-L-methionine = 2-methyladenosine(2503) in 23S rRNA + 5'-deoxyadenosine + L-methionine + 2 oxidized [2Fe-2S]-[ferredoxin] + S-adenosyl-L-homocysteine</text>
        <dbReference type="Rhea" id="RHEA:42916"/>
        <dbReference type="Rhea" id="RHEA-COMP:10000"/>
        <dbReference type="Rhea" id="RHEA-COMP:10001"/>
        <dbReference type="Rhea" id="RHEA-COMP:10152"/>
        <dbReference type="Rhea" id="RHEA-COMP:10282"/>
        <dbReference type="ChEBI" id="CHEBI:17319"/>
        <dbReference type="ChEBI" id="CHEBI:33737"/>
        <dbReference type="ChEBI" id="CHEBI:33738"/>
        <dbReference type="ChEBI" id="CHEBI:57844"/>
        <dbReference type="ChEBI" id="CHEBI:57856"/>
        <dbReference type="ChEBI" id="CHEBI:59789"/>
        <dbReference type="ChEBI" id="CHEBI:74411"/>
        <dbReference type="ChEBI" id="CHEBI:74497"/>
        <dbReference type="EC" id="2.1.1.192"/>
    </reaction>
</comment>
<comment type="catalytic activity">
    <reaction evidence="1">
        <text>adenosine(37) in tRNA + 2 reduced [2Fe-2S]-[ferredoxin] + 2 S-adenosyl-L-methionine = 2-methyladenosine(37) in tRNA + 5'-deoxyadenosine + L-methionine + 2 oxidized [2Fe-2S]-[ferredoxin] + S-adenosyl-L-homocysteine</text>
        <dbReference type="Rhea" id="RHEA:43332"/>
        <dbReference type="Rhea" id="RHEA-COMP:10000"/>
        <dbReference type="Rhea" id="RHEA-COMP:10001"/>
        <dbReference type="Rhea" id="RHEA-COMP:10162"/>
        <dbReference type="Rhea" id="RHEA-COMP:10485"/>
        <dbReference type="ChEBI" id="CHEBI:17319"/>
        <dbReference type="ChEBI" id="CHEBI:33737"/>
        <dbReference type="ChEBI" id="CHEBI:33738"/>
        <dbReference type="ChEBI" id="CHEBI:57844"/>
        <dbReference type="ChEBI" id="CHEBI:57856"/>
        <dbReference type="ChEBI" id="CHEBI:59789"/>
        <dbReference type="ChEBI" id="CHEBI:74411"/>
        <dbReference type="ChEBI" id="CHEBI:74497"/>
        <dbReference type="EC" id="2.1.1.192"/>
    </reaction>
</comment>
<comment type="cofactor">
    <cofactor evidence="1">
        <name>[4Fe-4S] cluster</name>
        <dbReference type="ChEBI" id="CHEBI:49883"/>
    </cofactor>
    <text evidence="1">Binds 1 [4Fe-4S] cluster. The cluster is coordinated with 3 cysteines and an exchangeable S-adenosyl-L-methionine.</text>
</comment>
<comment type="subcellular location">
    <subcellularLocation>
        <location evidence="1">Cytoplasm</location>
    </subcellularLocation>
</comment>
<comment type="miscellaneous">
    <text evidence="1">Reaction proceeds by a ping-pong mechanism involving intermediate methylation of a conserved cysteine residue.</text>
</comment>
<comment type="similarity">
    <text evidence="1">Belongs to the radical SAM superfamily. RlmN family.</text>
</comment>
<keyword id="KW-0004">4Fe-4S</keyword>
<keyword id="KW-0963">Cytoplasm</keyword>
<keyword id="KW-1015">Disulfide bond</keyword>
<keyword id="KW-0408">Iron</keyword>
<keyword id="KW-0411">Iron-sulfur</keyword>
<keyword id="KW-0479">Metal-binding</keyword>
<keyword id="KW-0489">Methyltransferase</keyword>
<keyword id="KW-1185">Reference proteome</keyword>
<keyword id="KW-0698">rRNA processing</keyword>
<keyword id="KW-0949">S-adenosyl-L-methionine</keyword>
<keyword id="KW-0808">Transferase</keyword>
<keyword id="KW-0819">tRNA processing</keyword>
<name>RLMN_THEMA</name>
<dbReference type="EC" id="2.1.1.192" evidence="1"/>
<dbReference type="EMBL" id="AE000512">
    <property type="protein sequence ID" value="AAD36781.1"/>
    <property type="molecule type" value="Genomic_DNA"/>
</dbReference>
<dbReference type="PIR" id="G72218">
    <property type="entry name" value="G72218"/>
</dbReference>
<dbReference type="RefSeq" id="NP_229514.1">
    <property type="nucleotide sequence ID" value="NC_000853.1"/>
</dbReference>
<dbReference type="RefSeq" id="WP_004082231.1">
    <property type="nucleotide sequence ID" value="NZ_CP011107.1"/>
</dbReference>
<dbReference type="SMR" id="Q9X240"/>
<dbReference type="FunCoup" id="Q9X240">
    <property type="interactions" value="393"/>
</dbReference>
<dbReference type="STRING" id="243274.TM_1715"/>
<dbReference type="PaxDb" id="243274-THEMA_05665"/>
<dbReference type="EnsemblBacteria" id="AAD36781">
    <property type="protein sequence ID" value="AAD36781"/>
    <property type="gene ID" value="TM_1715"/>
</dbReference>
<dbReference type="KEGG" id="tma:TM1715"/>
<dbReference type="KEGG" id="tmi:THEMA_05665"/>
<dbReference type="KEGG" id="tmm:Tmari_1723"/>
<dbReference type="KEGG" id="tmw:THMA_1757"/>
<dbReference type="eggNOG" id="COG0820">
    <property type="taxonomic scope" value="Bacteria"/>
</dbReference>
<dbReference type="InParanoid" id="Q9X240"/>
<dbReference type="OrthoDB" id="9793973at2"/>
<dbReference type="Proteomes" id="UP000008183">
    <property type="component" value="Chromosome"/>
</dbReference>
<dbReference type="GO" id="GO:0005737">
    <property type="term" value="C:cytoplasm"/>
    <property type="evidence" value="ECO:0007669"/>
    <property type="project" value="UniProtKB-SubCell"/>
</dbReference>
<dbReference type="GO" id="GO:0051539">
    <property type="term" value="F:4 iron, 4 sulfur cluster binding"/>
    <property type="evidence" value="ECO:0007669"/>
    <property type="project" value="UniProtKB-UniRule"/>
</dbReference>
<dbReference type="GO" id="GO:0046872">
    <property type="term" value="F:metal ion binding"/>
    <property type="evidence" value="ECO:0007669"/>
    <property type="project" value="UniProtKB-KW"/>
</dbReference>
<dbReference type="GO" id="GO:0070040">
    <property type="term" value="F:rRNA (adenine(2503)-C2-)-methyltransferase activity"/>
    <property type="evidence" value="ECO:0007669"/>
    <property type="project" value="UniProtKB-UniRule"/>
</dbReference>
<dbReference type="GO" id="GO:0019843">
    <property type="term" value="F:rRNA binding"/>
    <property type="evidence" value="ECO:0007669"/>
    <property type="project" value="UniProtKB-UniRule"/>
</dbReference>
<dbReference type="GO" id="GO:0002935">
    <property type="term" value="F:tRNA (adenine(37)-C2)-methyltransferase activity"/>
    <property type="evidence" value="ECO:0007669"/>
    <property type="project" value="UniProtKB-UniRule"/>
</dbReference>
<dbReference type="GO" id="GO:0000049">
    <property type="term" value="F:tRNA binding"/>
    <property type="evidence" value="ECO:0007669"/>
    <property type="project" value="UniProtKB-UniRule"/>
</dbReference>
<dbReference type="GO" id="GO:0070475">
    <property type="term" value="P:rRNA base methylation"/>
    <property type="evidence" value="ECO:0000318"/>
    <property type="project" value="GO_Central"/>
</dbReference>
<dbReference type="GO" id="GO:0030488">
    <property type="term" value="P:tRNA methylation"/>
    <property type="evidence" value="ECO:0000318"/>
    <property type="project" value="GO_Central"/>
</dbReference>
<dbReference type="CDD" id="cd01335">
    <property type="entry name" value="Radical_SAM"/>
    <property type="match status" value="1"/>
</dbReference>
<dbReference type="FunFam" id="1.10.150.530:FF:000006">
    <property type="entry name" value="Probable dual-specificity RNA methyltransferase RlmN"/>
    <property type="match status" value="1"/>
</dbReference>
<dbReference type="FunFam" id="3.20.20.70:FF:000014">
    <property type="entry name" value="Probable dual-specificity RNA methyltransferase RlmN"/>
    <property type="match status" value="1"/>
</dbReference>
<dbReference type="Gene3D" id="1.10.150.530">
    <property type="match status" value="1"/>
</dbReference>
<dbReference type="Gene3D" id="3.20.20.70">
    <property type="entry name" value="Aldolase class I"/>
    <property type="match status" value="1"/>
</dbReference>
<dbReference type="HAMAP" id="MF_01849">
    <property type="entry name" value="RNA_methyltr_RlmN"/>
    <property type="match status" value="1"/>
</dbReference>
<dbReference type="InterPro" id="IPR013785">
    <property type="entry name" value="Aldolase_TIM"/>
</dbReference>
<dbReference type="InterPro" id="IPR006638">
    <property type="entry name" value="Elp3/MiaA/NifB-like_rSAM"/>
</dbReference>
<dbReference type="InterPro" id="IPR040072">
    <property type="entry name" value="Methyltransferase_A"/>
</dbReference>
<dbReference type="InterPro" id="IPR048641">
    <property type="entry name" value="RlmN_N"/>
</dbReference>
<dbReference type="InterPro" id="IPR027492">
    <property type="entry name" value="RNA_MTrfase_RlmN"/>
</dbReference>
<dbReference type="InterPro" id="IPR004383">
    <property type="entry name" value="rRNA_lsu_MTrfase_RlmN/Cfr"/>
</dbReference>
<dbReference type="InterPro" id="IPR007197">
    <property type="entry name" value="rSAM"/>
</dbReference>
<dbReference type="NCBIfam" id="TIGR00048">
    <property type="entry name" value="rRNA_mod_RlmN"/>
    <property type="match status" value="1"/>
</dbReference>
<dbReference type="PANTHER" id="PTHR30544">
    <property type="entry name" value="23S RRNA METHYLTRANSFERASE"/>
    <property type="match status" value="1"/>
</dbReference>
<dbReference type="PANTHER" id="PTHR30544:SF5">
    <property type="entry name" value="RADICAL SAM CORE DOMAIN-CONTAINING PROTEIN"/>
    <property type="match status" value="1"/>
</dbReference>
<dbReference type="Pfam" id="PF04055">
    <property type="entry name" value="Radical_SAM"/>
    <property type="match status" value="1"/>
</dbReference>
<dbReference type="Pfam" id="PF21016">
    <property type="entry name" value="RlmN_N"/>
    <property type="match status" value="1"/>
</dbReference>
<dbReference type="PIRSF" id="PIRSF006004">
    <property type="entry name" value="CHP00048"/>
    <property type="match status" value="1"/>
</dbReference>
<dbReference type="SFLD" id="SFLDF00275">
    <property type="entry name" value="adenosine_C2_methyltransferase"/>
    <property type="match status" value="1"/>
</dbReference>
<dbReference type="SFLD" id="SFLDS00029">
    <property type="entry name" value="Radical_SAM"/>
    <property type="match status" value="1"/>
</dbReference>
<dbReference type="SMART" id="SM00729">
    <property type="entry name" value="Elp3"/>
    <property type="match status" value="1"/>
</dbReference>
<dbReference type="SUPFAM" id="SSF102114">
    <property type="entry name" value="Radical SAM enzymes"/>
    <property type="match status" value="1"/>
</dbReference>
<dbReference type="PROSITE" id="PS51918">
    <property type="entry name" value="RADICAL_SAM"/>
    <property type="match status" value="1"/>
</dbReference>